<accession>A3PBP6</accession>
<dbReference type="EC" id="2.7.4.22" evidence="1"/>
<dbReference type="EMBL" id="CP000576">
    <property type="protein sequence ID" value="ABO17171.1"/>
    <property type="molecule type" value="Genomic_DNA"/>
</dbReference>
<dbReference type="RefSeq" id="WP_011862541.1">
    <property type="nucleotide sequence ID" value="NC_009091.1"/>
</dbReference>
<dbReference type="SMR" id="A3PBP6"/>
<dbReference type="STRING" id="167546.P9301_05481"/>
<dbReference type="KEGG" id="pmg:P9301_05481"/>
<dbReference type="eggNOG" id="COG0528">
    <property type="taxonomic scope" value="Bacteria"/>
</dbReference>
<dbReference type="HOGENOM" id="CLU_033861_0_0_3"/>
<dbReference type="OrthoDB" id="9807458at2"/>
<dbReference type="UniPathway" id="UPA00159">
    <property type="reaction ID" value="UER00275"/>
</dbReference>
<dbReference type="Proteomes" id="UP000001430">
    <property type="component" value="Chromosome"/>
</dbReference>
<dbReference type="GO" id="GO:0005737">
    <property type="term" value="C:cytoplasm"/>
    <property type="evidence" value="ECO:0007669"/>
    <property type="project" value="UniProtKB-SubCell"/>
</dbReference>
<dbReference type="GO" id="GO:0005524">
    <property type="term" value="F:ATP binding"/>
    <property type="evidence" value="ECO:0007669"/>
    <property type="project" value="UniProtKB-KW"/>
</dbReference>
<dbReference type="GO" id="GO:0033862">
    <property type="term" value="F:UMP kinase activity"/>
    <property type="evidence" value="ECO:0007669"/>
    <property type="project" value="UniProtKB-EC"/>
</dbReference>
<dbReference type="GO" id="GO:0044210">
    <property type="term" value="P:'de novo' CTP biosynthetic process"/>
    <property type="evidence" value="ECO:0007669"/>
    <property type="project" value="UniProtKB-UniRule"/>
</dbReference>
<dbReference type="GO" id="GO:0006225">
    <property type="term" value="P:UDP biosynthetic process"/>
    <property type="evidence" value="ECO:0007669"/>
    <property type="project" value="TreeGrafter"/>
</dbReference>
<dbReference type="CDD" id="cd04254">
    <property type="entry name" value="AAK_UMPK-PyrH-Ec"/>
    <property type="match status" value="1"/>
</dbReference>
<dbReference type="FunFam" id="3.40.1160.10:FF:000001">
    <property type="entry name" value="Uridylate kinase"/>
    <property type="match status" value="1"/>
</dbReference>
<dbReference type="Gene3D" id="3.40.1160.10">
    <property type="entry name" value="Acetylglutamate kinase-like"/>
    <property type="match status" value="1"/>
</dbReference>
<dbReference type="HAMAP" id="MF_01220_B">
    <property type="entry name" value="PyrH_B"/>
    <property type="match status" value="1"/>
</dbReference>
<dbReference type="InterPro" id="IPR036393">
    <property type="entry name" value="AceGlu_kinase-like_sf"/>
</dbReference>
<dbReference type="InterPro" id="IPR001048">
    <property type="entry name" value="Asp/Glu/Uridylate_kinase"/>
</dbReference>
<dbReference type="InterPro" id="IPR011817">
    <property type="entry name" value="Uridylate_kinase"/>
</dbReference>
<dbReference type="InterPro" id="IPR015963">
    <property type="entry name" value="Uridylate_kinase_bac"/>
</dbReference>
<dbReference type="NCBIfam" id="TIGR02075">
    <property type="entry name" value="pyrH_bact"/>
    <property type="match status" value="1"/>
</dbReference>
<dbReference type="PANTHER" id="PTHR42833">
    <property type="entry name" value="URIDYLATE KINASE"/>
    <property type="match status" value="1"/>
</dbReference>
<dbReference type="PANTHER" id="PTHR42833:SF4">
    <property type="entry name" value="URIDYLATE KINASE PUMPKIN, CHLOROPLASTIC"/>
    <property type="match status" value="1"/>
</dbReference>
<dbReference type="Pfam" id="PF00696">
    <property type="entry name" value="AA_kinase"/>
    <property type="match status" value="1"/>
</dbReference>
<dbReference type="PIRSF" id="PIRSF005650">
    <property type="entry name" value="Uridylate_kin"/>
    <property type="match status" value="1"/>
</dbReference>
<dbReference type="SUPFAM" id="SSF53633">
    <property type="entry name" value="Carbamate kinase-like"/>
    <property type="match status" value="1"/>
</dbReference>
<name>PYRH_PROM0</name>
<protein>
    <recommendedName>
        <fullName evidence="1">Uridylate kinase</fullName>
        <shortName evidence="1">UK</shortName>
        <ecNumber evidence="1">2.7.4.22</ecNumber>
    </recommendedName>
    <alternativeName>
        <fullName evidence="1">Uridine monophosphate kinase</fullName>
        <shortName evidence="1">UMP kinase</shortName>
        <shortName evidence="1">UMPK</shortName>
    </alternativeName>
</protein>
<proteinExistence type="inferred from homology"/>
<reference key="1">
    <citation type="journal article" date="2007" name="PLoS Genet.">
        <title>Patterns and implications of gene gain and loss in the evolution of Prochlorococcus.</title>
        <authorList>
            <person name="Kettler G.C."/>
            <person name="Martiny A.C."/>
            <person name="Huang K."/>
            <person name="Zucker J."/>
            <person name="Coleman M.L."/>
            <person name="Rodrigue S."/>
            <person name="Chen F."/>
            <person name="Lapidus A."/>
            <person name="Ferriera S."/>
            <person name="Johnson J."/>
            <person name="Steglich C."/>
            <person name="Church G.M."/>
            <person name="Richardson P."/>
            <person name="Chisholm S.W."/>
        </authorList>
    </citation>
    <scope>NUCLEOTIDE SEQUENCE [LARGE SCALE GENOMIC DNA]</scope>
    <source>
        <strain>MIT 9301</strain>
    </source>
</reference>
<evidence type="ECO:0000255" key="1">
    <source>
        <dbReference type="HAMAP-Rule" id="MF_01220"/>
    </source>
</evidence>
<organism>
    <name type="scientific">Prochlorococcus marinus (strain MIT 9301)</name>
    <dbReference type="NCBI Taxonomy" id="167546"/>
    <lineage>
        <taxon>Bacteria</taxon>
        <taxon>Bacillati</taxon>
        <taxon>Cyanobacteriota</taxon>
        <taxon>Cyanophyceae</taxon>
        <taxon>Synechococcales</taxon>
        <taxon>Prochlorococcaceae</taxon>
        <taxon>Prochlorococcus</taxon>
    </lineage>
</organism>
<gene>
    <name evidence="1" type="primary">pyrH</name>
    <name type="ordered locus">P9301_05481</name>
</gene>
<keyword id="KW-0067">ATP-binding</keyword>
<keyword id="KW-0963">Cytoplasm</keyword>
<keyword id="KW-0418">Kinase</keyword>
<keyword id="KW-0547">Nucleotide-binding</keyword>
<keyword id="KW-0665">Pyrimidine biosynthesis</keyword>
<keyword id="KW-1185">Reference proteome</keyword>
<keyword id="KW-0808">Transferase</keyword>
<comment type="function">
    <text evidence="1">Catalyzes the reversible phosphorylation of UMP to UDP.</text>
</comment>
<comment type="catalytic activity">
    <reaction evidence="1">
        <text>UMP + ATP = UDP + ADP</text>
        <dbReference type="Rhea" id="RHEA:24400"/>
        <dbReference type="ChEBI" id="CHEBI:30616"/>
        <dbReference type="ChEBI" id="CHEBI:57865"/>
        <dbReference type="ChEBI" id="CHEBI:58223"/>
        <dbReference type="ChEBI" id="CHEBI:456216"/>
        <dbReference type="EC" id="2.7.4.22"/>
    </reaction>
</comment>
<comment type="activity regulation">
    <text evidence="1">Inhibited by UTP.</text>
</comment>
<comment type="pathway">
    <text evidence="1">Pyrimidine metabolism; CTP biosynthesis via de novo pathway; UDP from UMP (UMPK route): step 1/1.</text>
</comment>
<comment type="subunit">
    <text evidence="1">Homohexamer.</text>
</comment>
<comment type="subcellular location">
    <subcellularLocation>
        <location evidence="1">Cytoplasm</location>
    </subcellularLocation>
</comment>
<comment type="similarity">
    <text evidence="1">Belongs to the UMP kinase family.</text>
</comment>
<feature type="chain" id="PRO_0000323919" description="Uridylate kinase">
    <location>
        <begin position="1"/>
        <end position="234"/>
    </location>
</feature>
<feature type="binding site" evidence="1">
    <location>
        <begin position="9"/>
        <end position="12"/>
    </location>
    <ligand>
        <name>ATP</name>
        <dbReference type="ChEBI" id="CHEBI:30616"/>
    </ligand>
</feature>
<feature type="binding site" evidence="1">
    <location>
        <position position="51"/>
    </location>
    <ligand>
        <name>UMP</name>
        <dbReference type="ChEBI" id="CHEBI:57865"/>
    </ligand>
</feature>
<feature type="binding site" evidence="1">
    <location>
        <position position="52"/>
    </location>
    <ligand>
        <name>ATP</name>
        <dbReference type="ChEBI" id="CHEBI:30616"/>
    </ligand>
</feature>
<feature type="binding site" evidence="1">
    <location>
        <position position="56"/>
    </location>
    <ligand>
        <name>ATP</name>
        <dbReference type="ChEBI" id="CHEBI:30616"/>
    </ligand>
</feature>
<feature type="binding site" evidence="1">
    <location>
        <position position="71"/>
    </location>
    <ligand>
        <name>UMP</name>
        <dbReference type="ChEBI" id="CHEBI:57865"/>
    </ligand>
</feature>
<feature type="binding site" evidence="1">
    <location>
        <begin position="132"/>
        <end position="139"/>
    </location>
    <ligand>
        <name>UMP</name>
        <dbReference type="ChEBI" id="CHEBI:57865"/>
    </ligand>
</feature>
<feature type="binding site" evidence="1">
    <location>
        <position position="159"/>
    </location>
    <ligand>
        <name>ATP</name>
        <dbReference type="ChEBI" id="CHEBI:30616"/>
    </ligand>
</feature>
<feature type="binding site" evidence="1">
    <location>
        <position position="165"/>
    </location>
    <ligand>
        <name>ATP</name>
        <dbReference type="ChEBI" id="CHEBI:30616"/>
    </ligand>
</feature>
<feature type="binding site" evidence="1">
    <location>
        <position position="168"/>
    </location>
    <ligand>
        <name>ATP</name>
        <dbReference type="ChEBI" id="CHEBI:30616"/>
    </ligand>
</feature>
<sequence>MAYKRVLLKLSGEALMGEKPYGIDPAIVQSIAEDVSKVVENNVQLAIVVGGGNIFRGLKGSADGMDRATADYVGMLATVMNAISLQDGLERVGVATRVQTAIEMQEIAEPYIRRRAMRHLEKGRVVVFGGGCGNPFFTTDTTAALRAAEINAEVVMKATKVDGVYNCDPNKFKDAKKYSSLSYQQVLSDEIAVMDSTAIALCKDNNIPIMVFDIFKKGNISKAVDGDPIGSLIS</sequence>